<organism>
    <name type="scientific">Azoarcus sp. (strain BH72)</name>
    <dbReference type="NCBI Taxonomy" id="418699"/>
    <lineage>
        <taxon>Bacteria</taxon>
        <taxon>Pseudomonadati</taxon>
        <taxon>Pseudomonadota</taxon>
        <taxon>Betaproteobacteria</taxon>
        <taxon>Rhodocyclales</taxon>
        <taxon>Zoogloeaceae</taxon>
        <taxon>Azoarcus</taxon>
    </lineage>
</organism>
<gene>
    <name evidence="1" type="primary">macB</name>
    <name type="ordered locus">azo0611</name>
</gene>
<accession>A1K323</accession>
<feature type="chain" id="PRO_0000280162" description="Macrolide export ATP-binding/permease protein MacB">
    <location>
        <begin position="1"/>
        <end position="656"/>
    </location>
</feature>
<feature type="transmembrane region" description="Helical" evidence="1">
    <location>
        <begin position="284"/>
        <end position="304"/>
    </location>
</feature>
<feature type="transmembrane region" description="Helical" evidence="1">
    <location>
        <begin position="531"/>
        <end position="551"/>
    </location>
</feature>
<feature type="transmembrane region" description="Helical" evidence="1">
    <location>
        <begin position="591"/>
        <end position="611"/>
    </location>
</feature>
<feature type="transmembrane region" description="Helical" evidence="1">
    <location>
        <begin position="619"/>
        <end position="639"/>
    </location>
</feature>
<feature type="domain" description="ABC transporter" evidence="1">
    <location>
        <begin position="20"/>
        <end position="258"/>
    </location>
</feature>
<feature type="binding site" evidence="1">
    <location>
        <begin position="56"/>
        <end position="63"/>
    </location>
    <ligand>
        <name>ATP</name>
        <dbReference type="ChEBI" id="CHEBI:30616"/>
    </ligand>
</feature>
<reference key="1">
    <citation type="journal article" date="2006" name="Nat. Biotechnol.">
        <title>Complete genome of the mutualistic, N2-fixing grass endophyte Azoarcus sp. strain BH72.</title>
        <authorList>
            <person name="Krause A."/>
            <person name="Ramakumar A."/>
            <person name="Bartels D."/>
            <person name="Battistoni F."/>
            <person name="Bekel T."/>
            <person name="Boch J."/>
            <person name="Boehm M."/>
            <person name="Friedrich F."/>
            <person name="Hurek T."/>
            <person name="Krause L."/>
            <person name="Linke B."/>
            <person name="McHardy A.C."/>
            <person name="Sarkar A."/>
            <person name="Schneiker S."/>
            <person name="Syed A.A."/>
            <person name="Thauer R."/>
            <person name="Vorhoelter F.-J."/>
            <person name="Weidner S."/>
            <person name="Puehler A."/>
            <person name="Reinhold-Hurek B."/>
            <person name="Kaiser O."/>
            <person name="Goesmann A."/>
        </authorList>
    </citation>
    <scope>NUCLEOTIDE SEQUENCE [LARGE SCALE GENOMIC DNA]</scope>
    <source>
        <strain>BH72</strain>
    </source>
</reference>
<protein>
    <recommendedName>
        <fullName evidence="1">Macrolide export ATP-binding/permease protein MacB</fullName>
        <ecNumber evidence="1">7.6.2.-</ecNumber>
    </recommendedName>
</protein>
<keyword id="KW-0046">Antibiotic resistance</keyword>
<keyword id="KW-0067">ATP-binding</keyword>
<keyword id="KW-0997">Cell inner membrane</keyword>
<keyword id="KW-1003">Cell membrane</keyword>
<keyword id="KW-0472">Membrane</keyword>
<keyword id="KW-0547">Nucleotide-binding</keyword>
<keyword id="KW-1185">Reference proteome</keyword>
<keyword id="KW-1278">Translocase</keyword>
<keyword id="KW-0812">Transmembrane</keyword>
<keyword id="KW-1133">Transmembrane helix</keyword>
<keyword id="KW-0813">Transport</keyword>
<dbReference type="EC" id="7.6.2.-" evidence="1"/>
<dbReference type="EMBL" id="AM406670">
    <property type="protein sequence ID" value="CAL93228.1"/>
    <property type="molecule type" value="Genomic_DNA"/>
</dbReference>
<dbReference type="RefSeq" id="WP_011764346.1">
    <property type="nucleotide sequence ID" value="NC_008702.1"/>
</dbReference>
<dbReference type="SMR" id="A1K323"/>
<dbReference type="STRING" id="62928.azo0611"/>
<dbReference type="KEGG" id="aoa:dqs_0680"/>
<dbReference type="KEGG" id="azo:azo0611"/>
<dbReference type="eggNOG" id="COG0577">
    <property type="taxonomic scope" value="Bacteria"/>
</dbReference>
<dbReference type="eggNOG" id="COG1136">
    <property type="taxonomic scope" value="Bacteria"/>
</dbReference>
<dbReference type="HOGENOM" id="CLU_000604_78_2_4"/>
<dbReference type="OrthoDB" id="4814201at2"/>
<dbReference type="Proteomes" id="UP000002588">
    <property type="component" value="Chromosome"/>
</dbReference>
<dbReference type="GO" id="GO:0005886">
    <property type="term" value="C:plasma membrane"/>
    <property type="evidence" value="ECO:0007669"/>
    <property type="project" value="UniProtKB-SubCell"/>
</dbReference>
<dbReference type="GO" id="GO:0005524">
    <property type="term" value="F:ATP binding"/>
    <property type="evidence" value="ECO:0007669"/>
    <property type="project" value="UniProtKB-KW"/>
</dbReference>
<dbReference type="GO" id="GO:0016887">
    <property type="term" value="F:ATP hydrolysis activity"/>
    <property type="evidence" value="ECO:0007669"/>
    <property type="project" value="InterPro"/>
</dbReference>
<dbReference type="GO" id="GO:0022857">
    <property type="term" value="F:transmembrane transporter activity"/>
    <property type="evidence" value="ECO:0007669"/>
    <property type="project" value="TreeGrafter"/>
</dbReference>
<dbReference type="GO" id="GO:0046677">
    <property type="term" value="P:response to antibiotic"/>
    <property type="evidence" value="ECO:0007669"/>
    <property type="project" value="UniProtKB-KW"/>
</dbReference>
<dbReference type="CDD" id="cd03255">
    <property type="entry name" value="ABC_MJ0796_LolCDE_FtsE"/>
    <property type="match status" value="1"/>
</dbReference>
<dbReference type="FunFam" id="3.40.50.300:FF:000032">
    <property type="entry name" value="Export ABC transporter ATP-binding protein"/>
    <property type="match status" value="1"/>
</dbReference>
<dbReference type="Gene3D" id="3.40.50.300">
    <property type="entry name" value="P-loop containing nucleotide triphosphate hydrolases"/>
    <property type="match status" value="1"/>
</dbReference>
<dbReference type="InterPro" id="IPR003593">
    <property type="entry name" value="AAA+_ATPase"/>
</dbReference>
<dbReference type="InterPro" id="IPR003838">
    <property type="entry name" value="ABC3_permease_C"/>
</dbReference>
<dbReference type="InterPro" id="IPR003439">
    <property type="entry name" value="ABC_transporter-like_ATP-bd"/>
</dbReference>
<dbReference type="InterPro" id="IPR017871">
    <property type="entry name" value="ABC_transporter-like_CS"/>
</dbReference>
<dbReference type="InterPro" id="IPR017911">
    <property type="entry name" value="MacB-like_ATP-bd"/>
</dbReference>
<dbReference type="InterPro" id="IPR025857">
    <property type="entry name" value="MacB_PCD"/>
</dbReference>
<dbReference type="InterPro" id="IPR050250">
    <property type="entry name" value="Macrolide_Exporter_MacB"/>
</dbReference>
<dbReference type="InterPro" id="IPR027417">
    <property type="entry name" value="P-loop_NTPase"/>
</dbReference>
<dbReference type="PANTHER" id="PTHR30572:SF14">
    <property type="entry name" value="MACROLIDE EXPORT ATP-BINDING_PERMEASE PROTEIN MACB"/>
    <property type="match status" value="1"/>
</dbReference>
<dbReference type="PANTHER" id="PTHR30572">
    <property type="entry name" value="MEMBRANE COMPONENT OF TRANSPORTER-RELATED"/>
    <property type="match status" value="1"/>
</dbReference>
<dbReference type="Pfam" id="PF00005">
    <property type="entry name" value="ABC_tran"/>
    <property type="match status" value="1"/>
</dbReference>
<dbReference type="Pfam" id="PF02687">
    <property type="entry name" value="FtsX"/>
    <property type="match status" value="1"/>
</dbReference>
<dbReference type="Pfam" id="PF12704">
    <property type="entry name" value="MacB_PCD"/>
    <property type="match status" value="1"/>
</dbReference>
<dbReference type="SMART" id="SM00382">
    <property type="entry name" value="AAA"/>
    <property type="match status" value="1"/>
</dbReference>
<dbReference type="SUPFAM" id="SSF52540">
    <property type="entry name" value="P-loop containing nucleoside triphosphate hydrolases"/>
    <property type="match status" value="1"/>
</dbReference>
<dbReference type="PROSITE" id="PS00211">
    <property type="entry name" value="ABC_TRANSPORTER_1"/>
    <property type="match status" value="1"/>
</dbReference>
<dbReference type="PROSITE" id="PS50893">
    <property type="entry name" value="ABC_TRANSPORTER_2"/>
    <property type="match status" value="1"/>
</dbReference>
<dbReference type="PROSITE" id="PS51267">
    <property type="entry name" value="MACB"/>
    <property type="match status" value="1"/>
</dbReference>
<evidence type="ECO:0000255" key="1">
    <source>
        <dbReference type="HAMAP-Rule" id="MF_01720"/>
    </source>
</evidence>
<name>MACB_AZOSB</name>
<comment type="function">
    <text evidence="1">Non-canonical ABC transporter that contains transmembrane domains (TMD), which form a pore in the inner membrane, and an ATP-binding domain (NBD), which is responsible for energy generation. Confers resistance against macrolides.</text>
</comment>
<comment type="subunit">
    <text evidence="1">Homodimer.</text>
</comment>
<comment type="subcellular location">
    <subcellularLocation>
        <location evidence="1">Cell inner membrane</location>
        <topology evidence="1">Multi-pass membrane protein</topology>
    </subcellularLocation>
</comment>
<comment type="similarity">
    <text evidence="1">Belongs to the ABC transporter superfamily. Macrolide exporter (TC 3.A.1.122) family.</text>
</comment>
<proteinExistence type="inferred from homology"/>
<sequence>MKREAFSPSASSTGAGTPLIELAGITRSFRNGEIETRVLHGIDLTIYPGEFVAIVGASGSGKSTLMNILGCLDRPSSGTYRFMGEDVAGFDRDELARLRREAFGFVFQSYNLLGGASARENVEVPAVYSGMPPAERHARAEQLLASLGLGERSHHRPSQLSGGQQQRVSIARALMNGGRIILADEPTGALDSRSGEEVMKLLRQLSAEGHTIILITHAREVAEMAQRIIEIRDGHIVADPGPSKPQGPEPDFAPHVDRTSSMSDLVEATRTALRALRANLFRSALTLLGIVIGVASVIAMLAIGDGAKAKVVDQISAMGTNLLTVRPGAPNQRGRETTATLVIEDVRAIAELPNVLASVPEQSASVTLRADNTDQRTTANATSWNYGVARNWPVASGTFFSAEDEARYATVAVLGQTTAGALFPGVDPIGQYVLVNNIPFQVIGVMSPKGATPWGQDQDDIVFVPFTTGSLRVTGQRYLRNVTVAVEDVSRIDATQNEVSQLLLARHGVEDFQIRNMASVIDTVSATQNTLTILLGTVAAISLLVGGIGVMNIMLVSVTERTREIGIRMATGARMKNILQQFLIEALVVSALGGLIGVAVGLGTAAVIALFDTPIKYSLLPVVLAFGCAFATGLVFGYLPARKAARLDPVVALASE</sequence>